<evidence type="ECO:0000255" key="1">
    <source>
        <dbReference type="HAMAP-Rule" id="MF_00121"/>
    </source>
</evidence>
<proteinExistence type="inferred from homology"/>
<protein>
    <recommendedName>
        <fullName evidence="1">Aspartyl/glutamyl-tRNA(Asn/Gln) amidotransferase subunit B</fullName>
        <shortName evidence="1">Asp/Glu-ADT subunit B</shortName>
        <ecNumber evidence="1">6.3.5.-</ecNumber>
    </recommendedName>
</protein>
<reference key="1">
    <citation type="journal article" date="2008" name="DNA Res.">
        <title>Complete genome sequence of Finegoldia magna, an anaerobic opportunistic pathogen.</title>
        <authorList>
            <person name="Goto T."/>
            <person name="Yamashita A."/>
            <person name="Hirakawa H."/>
            <person name="Matsutani M."/>
            <person name="Todo K."/>
            <person name="Ohshima K."/>
            <person name="Toh H."/>
            <person name="Miyamoto K."/>
            <person name="Kuhara S."/>
            <person name="Hattori M."/>
            <person name="Shimizu T."/>
            <person name="Akimoto S."/>
        </authorList>
    </citation>
    <scope>NUCLEOTIDE SEQUENCE [LARGE SCALE GENOMIC DNA]</scope>
    <source>
        <strain>ATCC 29328 / DSM 20472 / WAL 2508</strain>
    </source>
</reference>
<keyword id="KW-0067">ATP-binding</keyword>
<keyword id="KW-0436">Ligase</keyword>
<keyword id="KW-0547">Nucleotide-binding</keyword>
<keyword id="KW-0648">Protein biosynthesis</keyword>
<keyword id="KW-1185">Reference proteome</keyword>
<comment type="function">
    <text evidence="1">Allows the formation of correctly charged Asn-tRNA(Asn) or Gln-tRNA(Gln) through the transamidation of misacylated Asp-tRNA(Asn) or Glu-tRNA(Gln) in organisms which lack either or both of asparaginyl-tRNA or glutaminyl-tRNA synthetases. The reaction takes place in the presence of glutamine and ATP through an activated phospho-Asp-tRNA(Asn) or phospho-Glu-tRNA(Gln).</text>
</comment>
<comment type="catalytic activity">
    <reaction evidence="1">
        <text>L-glutamyl-tRNA(Gln) + L-glutamine + ATP + H2O = L-glutaminyl-tRNA(Gln) + L-glutamate + ADP + phosphate + H(+)</text>
        <dbReference type="Rhea" id="RHEA:17521"/>
        <dbReference type="Rhea" id="RHEA-COMP:9681"/>
        <dbReference type="Rhea" id="RHEA-COMP:9684"/>
        <dbReference type="ChEBI" id="CHEBI:15377"/>
        <dbReference type="ChEBI" id="CHEBI:15378"/>
        <dbReference type="ChEBI" id="CHEBI:29985"/>
        <dbReference type="ChEBI" id="CHEBI:30616"/>
        <dbReference type="ChEBI" id="CHEBI:43474"/>
        <dbReference type="ChEBI" id="CHEBI:58359"/>
        <dbReference type="ChEBI" id="CHEBI:78520"/>
        <dbReference type="ChEBI" id="CHEBI:78521"/>
        <dbReference type="ChEBI" id="CHEBI:456216"/>
    </reaction>
</comment>
<comment type="catalytic activity">
    <reaction evidence="1">
        <text>L-aspartyl-tRNA(Asn) + L-glutamine + ATP + H2O = L-asparaginyl-tRNA(Asn) + L-glutamate + ADP + phosphate + 2 H(+)</text>
        <dbReference type="Rhea" id="RHEA:14513"/>
        <dbReference type="Rhea" id="RHEA-COMP:9674"/>
        <dbReference type="Rhea" id="RHEA-COMP:9677"/>
        <dbReference type="ChEBI" id="CHEBI:15377"/>
        <dbReference type="ChEBI" id="CHEBI:15378"/>
        <dbReference type="ChEBI" id="CHEBI:29985"/>
        <dbReference type="ChEBI" id="CHEBI:30616"/>
        <dbReference type="ChEBI" id="CHEBI:43474"/>
        <dbReference type="ChEBI" id="CHEBI:58359"/>
        <dbReference type="ChEBI" id="CHEBI:78515"/>
        <dbReference type="ChEBI" id="CHEBI:78516"/>
        <dbReference type="ChEBI" id="CHEBI:456216"/>
    </reaction>
</comment>
<comment type="subunit">
    <text evidence="1">Heterotrimer of A, B and C subunits.</text>
</comment>
<comment type="similarity">
    <text evidence="1">Belongs to the GatB/GatE family. GatB subfamily.</text>
</comment>
<sequence length="473" mass="54751">MNLKTLIGLEIHVELSTKTKMFCGCKNEFGQIPNTNVCPICLGHPGALPHMNKQALRYAIMAGLAFDCDIANEFKMDRKKYFYPDLVKGYQITQEDQPLCTNGYIELKTSTKNKKVRIRRIHIEEDTGKSIHNESGNTLMDYNRAGVPLIEIVSEPDMSNPDEAREFLETLRERIKYLEISDVKMSEGSLRCDVNINVYDEDSDFKTKISEIKNLNSFKSVSKALIYEQERHMQLAKENKIGEKETRRWDEDTQTTIVMRHKEEGNDYRFSVEGDIPKTYVEQSYIEEIKKNLPELPEMRKERFMNEYKIDEYDADILTRNGYLADYYEKVVEISNDPVQSSNWLLGDVLRQVNENEIEIEEMNMSAENLAKLIKLSSAKKINNQTAKKVLREMFNENFDPEVYVKEKGLLQVDDDNLLQQIVDEVVAENPESIESIRNGKDRAIGFLVGQCMKKSKGKGNPQKFNELIKEKI</sequence>
<gene>
    <name evidence="1" type="primary">gatB</name>
    <name type="ordered locus">FMG_0572</name>
</gene>
<accession>B0RZW3</accession>
<feature type="chain" id="PRO_1000095211" description="Aspartyl/glutamyl-tRNA(Asn/Gln) amidotransferase subunit B">
    <location>
        <begin position="1"/>
        <end position="473"/>
    </location>
</feature>
<organism>
    <name type="scientific">Finegoldia magna (strain ATCC 29328 / DSM 20472 / WAL 2508)</name>
    <name type="common">Peptostreptococcus magnus</name>
    <dbReference type="NCBI Taxonomy" id="334413"/>
    <lineage>
        <taxon>Bacteria</taxon>
        <taxon>Bacillati</taxon>
        <taxon>Bacillota</taxon>
        <taxon>Tissierellia</taxon>
        <taxon>Tissierellales</taxon>
        <taxon>Peptoniphilaceae</taxon>
        <taxon>Finegoldia</taxon>
    </lineage>
</organism>
<name>GATB_FINM2</name>
<dbReference type="EC" id="6.3.5.-" evidence="1"/>
<dbReference type="EMBL" id="AP008971">
    <property type="protein sequence ID" value="BAG07990.1"/>
    <property type="molecule type" value="Genomic_DNA"/>
</dbReference>
<dbReference type="RefSeq" id="WP_002838180.1">
    <property type="nucleotide sequence ID" value="NC_010376.1"/>
</dbReference>
<dbReference type="SMR" id="B0RZW3"/>
<dbReference type="STRING" id="334413.FMG_0572"/>
<dbReference type="KEGG" id="fma:FMG_0572"/>
<dbReference type="eggNOG" id="COG0064">
    <property type="taxonomic scope" value="Bacteria"/>
</dbReference>
<dbReference type="HOGENOM" id="CLU_019240_0_0_9"/>
<dbReference type="Proteomes" id="UP000001319">
    <property type="component" value="Chromosome"/>
</dbReference>
<dbReference type="GO" id="GO:0050566">
    <property type="term" value="F:asparaginyl-tRNA synthase (glutamine-hydrolyzing) activity"/>
    <property type="evidence" value="ECO:0007669"/>
    <property type="project" value="RHEA"/>
</dbReference>
<dbReference type="GO" id="GO:0005524">
    <property type="term" value="F:ATP binding"/>
    <property type="evidence" value="ECO:0007669"/>
    <property type="project" value="UniProtKB-KW"/>
</dbReference>
<dbReference type="GO" id="GO:0050567">
    <property type="term" value="F:glutaminyl-tRNA synthase (glutamine-hydrolyzing) activity"/>
    <property type="evidence" value="ECO:0007669"/>
    <property type="project" value="UniProtKB-UniRule"/>
</dbReference>
<dbReference type="GO" id="GO:0070681">
    <property type="term" value="P:glutaminyl-tRNAGln biosynthesis via transamidation"/>
    <property type="evidence" value="ECO:0007669"/>
    <property type="project" value="TreeGrafter"/>
</dbReference>
<dbReference type="GO" id="GO:0006412">
    <property type="term" value="P:translation"/>
    <property type="evidence" value="ECO:0007669"/>
    <property type="project" value="UniProtKB-UniRule"/>
</dbReference>
<dbReference type="FunFam" id="1.10.10.410:FF:000001">
    <property type="entry name" value="Aspartyl/glutamyl-tRNA(Asn/Gln) amidotransferase subunit B"/>
    <property type="match status" value="1"/>
</dbReference>
<dbReference type="Gene3D" id="1.10.10.410">
    <property type="match status" value="1"/>
</dbReference>
<dbReference type="Gene3D" id="1.10.150.380">
    <property type="entry name" value="GatB domain, N-terminal subdomain"/>
    <property type="match status" value="1"/>
</dbReference>
<dbReference type="HAMAP" id="MF_00121">
    <property type="entry name" value="GatB"/>
    <property type="match status" value="1"/>
</dbReference>
<dbReference type="InterPro" id="IPR017959">
    <property type="entry name" value="Asn/Gln-tRNA_amidoTrfase_suB/E"/>
</dbReference>
<dbReference type="InterPro" id="IPR006075">
    <property type="entry name" value="Asn/Gln-tRNA_Trfase_suB/E_cat"/>
</dbReference>
<dbReference type="InterPro" id="IPR018027">
    <property type="entry name" value="Asn/Gln_amidotransferase"/>
</dbReference>
<dbReference type="InterPro" id="IPR003789">
    <property type="entry name" value="Asn/Gln_tRNA_amidoTrase-B-like"/>
</dbReference>
<dbReference type="InterPro" id="IPR004413">
    <property type="entry name" value="GatB"/>
</dbReference>
<dbReference type="InterPro" id="IPR042114">
    <property type="entry name" value="GatB_C_1"/>
</dbReference>
<dbReference type="InterPro" id="IPR023168">
    <property type="entry name" value="GatB_Yqey_C_2"/>
</dbReference>
<dbReference type="InterPro" id="IPR017958">
    <property type="entry name" value="Gln-tRNA_amidoTrfase_suB_CS"/>
</dbReference>
<dbReference type="InterPro" id="IPR014746">
    <property type="entry name" value="Gln_synth/guanido_kin_cat_dom"/>
</dbReference>
<dbReference type="NCBIfam" id="TIGR00133">
    <property type="entry name" value="gatB"/>
    <property type="match status" value="1"/>
</dbReference>
<dbReference type="NCBIfam" id="NF004012">
    <property type="entry name" value="PRK05477.1-2"/>
    <property type="match status" value="1"/>
</dbReference>
<dbReference type="NCBIfam" id="NF004014">
    <property type="entry name" value="PRK05477.1-4"/>
    <property type="match status" value="1"/>
</dbReference>
<dbReference type="PANTHER" id="PTHR11659">
    <property type="entry name" value="GLUTAMYL-TRNA GLN AMIDOTRANSFERASE SUBUNIT B MITOCHONDRIAL AND PROKARYOTIC PET112-RELATED"/>
    <property type="match status" value="1"/>
</dbReference>
<dbReference type="PANTHER" id="PTHR11659:SF0">
    <property type="entry name" value="GLUTAMYL-TRNA(GLN) AMIDOTRANSFERASE SUBUNIT B, MITOCHONDRIAL"/>
    <property type="match status" value="1"/>
</dbReference>
<dbReference type="Pfam" id="PF02934">
    <property type="entry name" value="GatB_N"/>
    <property type="match status" value="1"/>
</dbReference>
<dbReference type="Pfam" id="PF02637">
    <property type="entry name" value="GatB_Yqey"/>
    <property type="match status" value="1"/>
</dbReference>
<dbReference type="SMART" id="SM00845">
    <property type="entry name" value="GatB_Yqey"/>
    <property type="match status" value="1"/>
</dbReference>
<dbReference type="SUPFAM" id="SSF89095">
    <property type="entry name" value="GatB/YqeY motif"/>
    <property type="match status" value="1"/>
</dbReference>
<dbReference type="SUPFAM" id="SSF55931">
    <property type="entry name" value="Glutamine synthetase/guanido kinase"/>
    <property type="match status" value="1"/>
</dbReference>
<dbReference type="PROSITE" id="PS01234">
    <property type="entry name" value="GATB"/>
    <property type="match status" value="1"/>
</dbReference>